<gene>
    <name evidence="1" type="primary">rplT</name>
    <name type="ordered locus">LEUM_1441</name>
</gene>
<sequence length="139" mass="15823">MRVKGGTVSRARRKKFVKLAKGYRGQRRINYKVAKQQVYKSYLYAYRDRKNTKRNFRKLWIARINAAARMNGLSYSKLMHGLTLAGVELNRKMLAEIAVSDFDTFTKLADQAKAALSSDNVLVQARTAATTDTTVSVER</sequence>
<comment type="function">
    <text evidence="1">Binds directly to 23S ribosomal RNA and is necessary for the in vitro assembly process of the 50S ribosomal subunit. It is not involved in the protein synthesizing functions of that subunit.</text>
</comment>
<comment type="similarity">
    <text evidence="1">Belongs to the bacterial ribosomal protein bL20 family.</text>
</comment>
<organism>
    <name type="scientific">Leuconostoc mesenteroides subsp. mesenteroides (strain ATCC 8293 / DSM 20343 / BCRC 11652 / CCM 1803 / JCM 6124 / NCDO 523 / NBRC 100496 / NCIMB 8023 / NCTC 12954 / NRRL B-1118 / 37Y)</name>
    <dbReference type="NCBI Taxonomy" id="203120"/>
    <lineage>
        <taxon>Bacteria</taxon>
        <taxon>Bacillati</taxon>
        <taxon>Bacillota</taxon>
        <taxon>Bacilli</taxon>
        <taxon>Lactobacillales</taxon>
        <taxon>Lactobacillaceae</taxon>
        <taxon>Leuconostoc</taxon>
    </lineage>
</organism>
<dbReference type="EMBL" id="CP000414">
    <property type="protein sequence ID" value="ABJ62534.1"/>
    <property type="molecule type" value="Genomic_DNA"/>
</dbReference>
<dbReference type="RefSeq" id="WP_002815114.1">
    <property type="nucleotide sequence ID" value="NC_008531.1"/>
</dbReference>
<dbReference type="SMR" id="Q03W88"/>
<dbReference type="EnsemblBacteria" id="ABJ62534">
    <property type="protein sequence ID" value="ABJ62534"/>
    <property type="gene ID" value="LEUM_1441"/>
</dbReference>
<dbReference type="GeneID" id="29577762"/>
<dbReference type="KEGG" id="lme:LEUM_1441"/>
<dbReference type="eggNOG" id="COG0292">
    <property type="taxonomic scope" value="Bacteria"/>
</dbReference>
<dbReference type="HOGENOM" id="CLU_123265_0_1_9"/>
<dbReference type="Proteomes" id="UP000000362">
    <property type="component" value="Chromosome"/>
</dbReference>
<dbReference type="GO" id="GO:1990904">
    <property type="term" value="C:ribonucleoprotein complex"/>
    <property type="evidence" value="ECO:0007669"/>
    <property type="project" value="UniProtKB-KW"/>
</dbReference>
<dbReference type="GO" id="GO:0005840">
    <property type="term" value="C:ribosome"/>
    <property type="evidence" value="ECO:0007669"/>
    <property type="project" value="UniProtKB-KW"/>
</dbReference>
<dbReference type="GO" id="GO:0019843">
    <property type="term" value="F:rRNA binding"/>
    <property type="evidence" value="ECO:0007669"/>
    <property type="project" value="UniProtKB-UniRule"/>
</dbReference>
<dbReference type="GO" id="GO:0003735">
    <property type="term" value="F:structural constituent of ribosome"/>
    <property type="evidence" value="ECO:0007669"/>
    <property type="project" value="InterPro"/>
</dbReference>
<dbReference type="GO" id="GO:0000027">
    <property type="term" value="P:ribosomal large subunit assembly"/>
    <property type="evidence" value="ECO:0007669"/>
    <property type="project" value="UniProtKB-UniRule"/>
</dbReference>
<dbReference type="GO" id="GO:0006412">
    <property type="term" value="P:translation"/>
    <property type="evidence" value="ECO:0007669"/>
    <property type="project" value="InterPro"/>
</dbReference>
<dbReference type="CDD" id="cd07026">
    <property type="entry name" value="Ribosomal_L20"/>
    <property type="match status" value="1"/>
</dbReference>
<dbReference type="FunFam" id="1.10.1900.20:FF:000001">
    <property type="entry name" value="50S ribosomal protein L20"/>
    <property type="match status" value="1"/>
</dbReference>
<dbReference type="Gene3D" id="6.10.160.10">
    <property type="match status" value="1"/>
</dbReference>
<dbReference type="Gene3D" id="1.10.1900.20">
    <property type="entry name" value="Ribosomal protein L20"/>
    <property type="match status" value="1"/>
</dbReference>
<dbReference type="HAMAP" id="MF_00382">
    <property type="entry name" value="Ribosomal_bL20"/>
    <property type="match status" value="1"/>
</dbReference>
<dbReference type="InterPro" id="IPR005813">
    <property type="entry name" value="Ribosomal_bL20"/>
</dbReference>
<dbReference type="InterPro" id="IPR049946">
    <property type="entry name" value="RIBOSOMAL_L20_CS"/>
</dbReference>
<dbReference type="InterPro" id="IPR035566">
    <property type="entry name" value="Ribosomal_protein_bL20_C"/>
</dbReference>
<dbReference type="NCBIfam" id="TIGR01032">
    <property type="entry name" value="rplT_bact"/>
    <property type="match status" value="1"/>
</dbReference>
<dbReference type="PANTHER" id="PTHR10986">
    <property type="entry name" value="39S RIBOSOMAL PROTEIN L20"/>
    <property type="match status" value="1"/>
</dbReference>
<dbReference type="Pfam" id="PF00453">
    <property type="entry name" value="Ribosomal_L20"/>
    <property type="match status" value="1"/>
</dbReference>
<dbReference type="PRINTS" id="PR00062">
    <property type="entry name" value="RIBOSOMALL20"/>
</dbReference>
<dbReference type="SUPFAM" id="SSF74731">
    <property type="entry name" value="Ribosomal protein L20"/>
    <property type="match status" value="1"/>
</dbReference>
<dbReference type="PROSITE" id="PS00937">
    <property type="entry name" value="RIBOSOMAL_L20"/>
    <property type="match status" value="1"/>
</dbReference>
<reference key="1">
    <citation type="journal article" date="2006" name="Proc. Natl. Acad. Sci. U.S.A.">
        <title>Comparative genomics of the lactic acid bacteria.</title>
        <authorList>
            <person name="Makarova K.S."/>
            <person name="Slesarev A."/>
            <person name="Wolf Y.I."/>
            <person name="Sorokin A."/>
            <person name="Mirkin B."/>
            <person name="Koonin E.V."/>
            <person name="Pavlov A."/>
            <person name="Pavlova N."/>
            <person name="Karamychev V."/>
            <person name="Polouchine N."/>
            <person name="Shakhova V."/>
            <person name="Grigoriev I."/>
            <person name="Lou Y."/>
            <person name="Rohksar D."/>
            <person name="Lucas S."/>
            <person name="Huang K."/>
            <person name="Goodstein D.M."/>
            <person name="Hawkins T."/>
            <person name="Plengvidhya V."/>
            <person name="Welker D."/>
            <person name="Hughes J."/>
            <person name="Goh Y."/>
            <person name="Benson A."/>
            <person name="Baldwin K."/>
            <person name="Lee J.-H."/>
            <person name="Diaz-Muniz I."/>
            <person name="Dosti B."/>
            <person name="Smeianov V."/>
            <person name="Wechter W."/>
            <person name="Barabote R."/>
            <person name="Lorca G."/>
            <person name="Altermann E."/>
            <person name="Barrangou R."/>
            <person name="Ganesan B."/>
            <person name="Xie Y."/>
            <person name="Rawsthorne H."/>
            <person name="Tamir D."/>
            <person name="Parker C."/>
            <person name="Breidt F."/>
            <person name="Broadbent J.R."/>
            <person name="Hutkins R."/>
            <person name="O'Sullivan D."/>
            <person name="Steele J."/>
            <person name="Unlu G."/>
            <person name="Saier M.H. Jr."/>
            <person name="Klaenhammer T."/>
            <person name="Richardson P."/>
            <person name="Kozyavkin S."/>
            <person name="Weimer B.C."/>
            <person name="Mills D.A."/>
        </authorList>
    </citation>
    <scope>NUCLEOTIDE SEQUENCE [LARGE SCALE GENOMIC DNA]</scope>
    <source>
        <strain>ATCC 8293 / DSM 20343 / BCRC 11652 / CCM 1803 / JCM 6124 / NCDO 523 / NBRC 100496 / NCIMB 8023 / NCTC 12954 / NRRL B-1118 / 37Y</strain>
    </source>
</reference>
<proteinExistence type="inferred from homology"/>
<protein>
    <recommendedName>
        <fullName evidence="1">Large ribosomal subunit protein bL20</fullName>
    </recommendedName>
    <alternativeName>
        <fullName evidence="2">50S ribosomal protein L20</fullName>
    </alternativeName>
</protein>
<accession>Q03W88</accession>
<keyword id="KW-1185">Reference proteome</keyword>
<keyword id="KW-0687">Ribonucleoprotein</keyword>
<keyword id="KW-0689">Ribosomal protein</keyword>
<keyword id="KW-0694">RNA-binding</keyword>
<keyword id="KW-0699">rRNA-binding</keyword>
<name>RL20_LEUMM</name>
<evidence type="ECO:0000255" key="1">
    <source>
        <dbReference type="HAMAP-Rule" id="MF_00382"/>
    </source>
</evidence>
<evidence type="ECO:0000305" key="2"/>
<feature type="chain" id="PRO_0000355473" description="Large ribosomal subunit protein bL20">
    <location>
        <begin position="1"/>
        <end position="139"/>
    </location>
</feature>